<sequence length="360" mass="38031">MSFLEIKGLHKHYGPVAALAGVDLDVASGSRTAIVGPSGCGKTTLLRLIAGFEAPDQGRIVLDGEVLANGGAAVPAHRRGIGVVAQDGALFPHLTIGDNIGFGMGRGDDKRAERIVELAYIVGLDKAILKRRPHELSGGQQQRVALARAMAMKPRLMLLDEPFSALDTGLRASMRKAVAELLEAAGITTILVTHDQAEALSFAAQVAVMRDGKFSQVGTPRDLYLKPKDRMIAEFLGDAIILPASISGGFANSPLGRIAVDTNDSRDVARILLRPEQIGLKRTSREGMSGTPDMLFGEVTESEFAGSTCTIAVRLLNNFDPPDAAAIGNTPLILRKSGMDAPAVGEIVRLTVSGKAHVFV</sequence>
<protein>
    <recommendedName>
        <fullName evidence="1">Fe(3+) ions import ATP-binding protein FbpC</fullName>
        <ecNumber evidence="1">7.2.2.7</ecNumber>
    </recommendedName>
</protein>
<gene>
    <name evidence="1" type="primary">fbpC</name>
    <name type="ordered locus">mlr3498</name>
</gene>
<proteinExistence type="inferred from homology"/>
<organism>
    <name type="scientific">Mesorhizobium japonicum (strain LMG 29417 / CECT 9101 / MAFF 303099)</name>
    <name type="common">Mesorhizobium loti (strain MAFF 303099)</name>
    <dbReference type="NCBI Taxonomy" id="266835"/>
    <lineage>
        <taxon>Bacteria</taxon>
        <taxon>Pseudomonadati</taxon>
        <taxon>Pseudomonadota</taxon>
        <taxon>Alphaproteobacteria</taxon>
        <taxon>Hyphomicrobiales</taxon>
        <taxon>Phyllobacteriaceae</taxon>
        <taxon>Mesorhizobium</taxon>
    </lineage>
</organism>
<feature type="chain" id="PRO_0000092361" description="Fe(3+) ions import ATP-binding protein FbpC">
    <location>
        <begin position="1"/>
        <end position="360"/>
    </location>
</feature>
<feature type="domain" description="ABC transporter" evidence="1">
    <location>
        <begin position="4"/>
        <end position="236"/>
    </location>
</feature>
<feature type="binding site" evidence="1">
    <location>
        <begin position="36"/>
        <end position="43"/>
    </location>
    <ligand>
        <name>ATP</name>
        <dbReference type="ChEBI" id="CHEBI:30616"/>
    </ligand>
</feature>
<dbReference type="EC" id="7.2.2.7" evidence="1"/>
<dbReference type="EMBL" id="BA000012">
    <property type="protein sequence ID" value="BAB50373.1"/>
    <property type="molecule type" value="Genomic_DNA"/>
</dbReference>
<dbReference type="RefSeq" id="WP_010911719.1">
    <property type="nucleotide sequence ID" value="NC_002678.2"/>
</dbReference>
<dbReference type="SMR" id="Q98G43"/>
<dbReference type="KEGG" id="mlo:mlr3498"/>
<dbReference type="PATRIC" id="fig|266835.9.peg.2785"/>
<dbReference type="eggNOG" id="COG3842">
    <property type="taxonomic scope" value="Bacteria"/>
</dbReference>
<dbReference type="HOGENOM" id="CLU_000604_1_1_5"/>
<dbReference type="Proteomes" id="UP000000552">
    <property type="component" value="Chromosome"/>
</dbReference>
<dbReference type="GO" id="GO:0005886">
    <property type="term" value="C:plasma membrane"/>
    <property type="evidence" value="ECO:0007669"/>
    <property type="project" value="UniProtKB-SubCell"/>
</dbReference>
<dbReference type="GO" id="GO:0015408">
    <property type="term" value="F:ABC-type ferric iron transporter activity"/>
    <property type="evidence" value="ECO:0007669"/>
    <property type="project" value="UniProtKB-EC"/>
</dbReference>
<dbReference type="GO" id="GO:0005524">
    <property type="term" value="F:ATP binding"/>
    <property type="evidence" value="ECO:0007669"/>
    <property type="project" value="UniProtKB-KW"/>
</dbReference>
<dbReference type="GO" id="GO:0016887">
    <property type="term" value="F:ATP hydrolysis activity"/>
    <property type="evidence" value="ECO:0007669"/>
    <property type="project" value="InterPro"/>
</dbReference>
<dbReference type="CDD" id="cd03259">
    <property type="entry name" value="ABC_Carb_Solutes_like"/>
    <property type="match status" value="1"/>
</dbReference>
<dbReference type="FunFam" id="3.40.50.300:FF:000425">
    <property type="entry name" value="Probable ABC transporter, ATP-binding subunit"/>
    <property type="match status" value="1"/>
</dbReference>
<dbReference type="Gene3D" id="2.40.50.450">
    <property type="match status" value="1"/>
</dbReference>
<dbReference type="Gene3D" id="3.40.50.300">
    <property type="entry name" value="P-loop containing nucleotide triphosphate hydrolases"/>
    <property type="match status" value="1"/>
</dbReference>
<dbReference type="InterPro" id="IPR003593">
    <property type="entry name" value="AAA+_ATPase"/>
</dbReference>
<dbReference type="InterPro" id="IPR050093">
    <property type="entry name" value="ABC_SmlMolc_Importer"/>
</dbReference>
<dbReference type="InterPro" id="IPR003439">
    <property type="entry name" value="ABC_transporter-like_ATP-bd"/>
</dbReference>
<dbReference type="InterPro" id="IPR017871">
    <property type="entry name" value="ABC_transporter-like_CS"/>
</dbReference>
<dbReference type="InterPro" id="IPR015853">
    <property type="entry name" value="ABC_transpr_FbpC"/>
</dbReference>
<dbReference type="InterPro" id="IPR027417">
    <property type="entry name" value="P-loop_NTPase"/>
</dbReference>
<dbReference type="PANTHER" id="PTHR42781:SF5">
    <property type="entry name" value="PUTRESCINE TRANSPORT ATP-BINDING PROTEIN POTG"/>
    <property type="match status" value="1"/>
</dbReference>
<dbReference type="PANTHER" id="PTHR42781">
    <property type="entry name" value="SPERMIDINE/PUTRESCINE IMPORT ATP-BINDING PROTEIN POTA"/>
    <property type="match status" value="1"/>
</dbReference>
<dbReference type="Pfam" id="PF00005">
    <property type="entry name" value="ABC_tran"/>
    <property type="match status" value="1"/>
</dbReference>
<dbReference type="SMART" id="SM00382">
    <property type="entry name" value="AAA"/>
    <property type="match status" value="1"/>
</dbReference>
<dbReference type="SUPFAM" id="SSF52540">
    <property type="entry name" value="P-loop containing nucleoside triphosphate hydrolases"/>
    <property type="match status" value="1"/>
</dbReference>
<dbReference type="PROSITE" id="PS00211">
    <property type="entry name" value="ABC_TRANSPORTER_1"/>
    <property type="match status" value="1"/>
</dbReference>
<dbReference type="PROSITE" id="PS50893">
    <property type="entry name" value="ABC_TRANSPORTER_2"/>
    <property type="match status" value="1"/>
</dbReference>
<dbReference type="PROSITE" id="PS51242">
    <property type="entry name" value="FBPC"/>
    <property type="match status" value="1"/>
</dbReference>
<comment type="function">
    <text evidence="1">Part of the ABC transporter complex FbpABC involved in Fe(3+) ions import. Responsible for energy coupling to the transport system.</text>
</comment>
<comment type="catalytic activity">
    <reaction evidence="1">
        <text>Fe(3+)(out) + ATP + H2O = Fe(3+)(in) + ADP + phosphate + H(+)</text>
        <dbReference type="Rhea" id="RHEA:12332"/>
        <dbReference type="ChEBI" id="CHEBI:15377"/>
        <dbReference type="ChEBI" id="CHEBI:15378"/>
        <dbReference type="ChEBI" id="CHEBI:29034"/>
        <dbReference type="ChEBI" id="CHEBI:30616"/>
        <dbReference type="ChEBI" id="CHEBI:43474"/>
        <dbReference type="ChEBI" id="CHEBI:456216"/>
        <dbReference type="EC" id="7.2.2.7"/>
    </reaction>
</comment>
<comment type="subunit">
    <text evidence="1">The complex is composed of two ATP-binding proteins (FbpC), two transmembrane proteins (FbpB) and a solute-binding protein (FbpA).</text>
</comment>
<comment type="subcellular location">
    <subcellularLocation>
        <location evidence="1">Cell inner membrane</location>
        <topology evidence="1">Peripheral membrane protein</topology>
    </subcellularLocation>
</comment>
<comment type="similarity">
    <text evidence="1">Belongs to the ABC transporter superfamily. Fe(3+) ion importer (TC 3.A.1.10) family.</text>
</comment>
<accession>Q98G43</accession>
<keyword id="KW-0067">ATP-binding</keyword>
<keyword id="KW-0997">Cell inner membrane</keyword>
<keyword id="KW-1003">Cell membrane</keyword>
<keyword id="KW-0406">Ion transport</keyword>
<keyword id="KW-0408">Iron</keyword>
<keyword id="KW-0410">Iron transport</keyword>
<keyword id="KW-0472">Membrane</keyword>
<keyword id="KW-0547">Nucleotide-binding</keyword>
<keyword id="KW-1278">Translocase</keyword>
<keyword id="KW-0813">Transport</keyword>
<name>FBPC_RHILO</name>
<reference key="1">
    <citation type="journal article" date="2000" name="DNA Res.">
        <title>Complete genome structure of the nitrogen-fixing symbiotic bacterium Mesorhizobium loti.</title>
        <authorList>
            <person name="Kaneko T."/>
            <person name="Nakamura Y."/>
            <person name="Sato S."/>
            <person name="Asamizu E."/>
            <person name="Kato T."/>
            <person name="Sasamoto S."/>
            <person name="Watanabe A."/>
            <person name="Idesawa K."/>
            <person name="Ishikawa A."/>
            <person name="Kawashima K."/>
            <person name="Kimura T."/>
            <person name="Kishida Y."/>
            <person name="Kiyokawa C."/>
            <person name="Kohara M."/>
            <person name="Matsumoto M."/>
            <person name="Matsuno A."/>
            <person name="Mochizuki Y."/>
            <person name="Nakayama S."/>
            <person name="Nakazaki N."/>
            <person name="Shimpo S."/>
            <person name="Sugimoto M."/>
            <person name="Takeuchi C."/>
            <person name="Yamada M."/>
            <person name="Tabata S."/>
        </authorList>
    </citation>
    <scope>NUCLEOTIDE SEQUENCE [LARGE SCALE GENOMIC DNA]</scope>
    <source>
        <strain>LMG 29417 / CECT 9101 / MAFF 303099</strain>
    </source>
</reference>
<evidence type="ECO:0000255" key="1">
    <source>
        <dbReference type="HAMAP-Rule" id="MF_01706"/>
    </source>
</evidence>